<reference key="1">
    <citation type="journal article" date="2004" name="Nature">
        <title>Genome evolution in yeasts.</title>
        <authorList>
            <person name="Dujon B."/>
            <person name="Sherman D."/>
            <person name="Fischer G."/>
            <person name="Durrens P."/>
            <person name="Casaregola S."/>
            <person name="Lafontaine I."/>
            <person name="de Montigny J."/>
            <person name="Marck C."/>
            <person name="Neuveglise C."/>
            <person name="Talla E."/>
            <person name="Goffard N."/>
            <person name="Frangeul L."/>
            <person name="Aigle M."/>
            <person name="Anthouard V."/>
            <person name="Babour A."/>
            <person name="Barbe V."/>
            <person name="Barnay S."/>
            <person name="Blanchin S."/>
            <person name="Beckerich J.-M."/>
            <person name="Beyne E."/>
            <person name="Bleykasten C."/>
            <person name="Boisrame A."/>
            <person name="Boyer J."/>
            <person name="Cattolico L."/>
            <person name="Confanioleri F."/>
            <person name="de Daruvar A."/>
            <person name="Despons L."/>
            <person name="Fabre E."/>
            <person name="Fairhead C."/>
            <person name="Ferry-Dumazet H."/>
            <person name="Groppi A."/>
            <person name="Hantraye F."/>
            <person name="Hennequin C."/>
            <person name="Jauniaux N."/>
            <person name="Joyet P."/>
            <person name="Kachouri R."/>
            <person name="Kerrest A."/>
            <person name="Koszul R."/>
            <person name="Lemaire M."/>
            <person name="Lesur I."/>
            <person name="Ma L."/>
            <person name="Muller H."/>
            <person name="Nicaud J.-M."/>
            <person name="Nikolski M."/>
            <person name="Oztas S."/>
            <person name="Ozier-Kalogeropoulos O."/>
            <person name="Pellenz S."/>
            <person name="Potier S."/>
            <person name="Richard G.-F."/>
            <person name="Straub M.-L."/>
            <person name="Suleau A."/>
            <person name="Swennen D."/>
            <person name="Tekaia F."/>
            <person name="Wesolowski-Louvel M."/>
            <person name="Westhof E."/>
            <person name="Wirth B."/>
            <person name="Zeniou-Meyer M."/>
            <person name="Zivanovic Y."/>
            <person name="Bolotin-Fukuhara M."/>
            <person name="Thierry A."/>
            <person name="Bouchier C."/>
            <person name="Caudron B."/>
            <person name="Scarpelli C."/>
            <person name="Gaillardin C."/>
            <person name="Weissenbach J."/>
            <person name="Wincker P."/>
            <person name="Souciet J.-L."/>
        </authorList>
    </citation>
    <scope>NUCLEOTIDE SEQUENCE [LARGE SCALE GENOMIC DNA]</scope>
    <source>
        <strain>ATCC 2001 / BCRC 20586 / JCM 3761 / NBRC 0622 / NRRL Y-65 / CBS 138</strain>
    </source>
</reference>
<comment type="function">
    <text evidence="1">Required for the processing of the 20S rRNA-precursor to mature 18S rRNA in a late step of the maturation of 40S ribosomal subunits. Has a physiological role leading to 18S rRNA stability (By similarity).</text>
</comment>
<comment type="subunit">
    <text>Component of the small ribosomal subunit. Mature ribosomes consist of a small (40S) and a large (60S) subunit. The 40S subunit contains about 33 different proteins and 1 molecule of RNA (18S). The 60S subunit contains about 49 different proteins and 3 molecules of RNA (25S, 5.8S and 5S).</text>
</comment>
<comment type="subcellular location">
    <subcellularLocation>
        <location evidence="1">Cytoplasm</location>
    </subcellularLocation>
</comment>
<comment type="similarity">
    <text evidence="2">Belongs to the eukaryotic ribosomal protein eS21 family.</text>
</comment>
<feature type="chain" id="PRO_0000194757" description="Small ribosomal subunit protein eS21">
    <location>
        <begin position="1"/>
        <end position="87"/>
    </location>
</feature>
<sequence>MENDKGQLVELYIPRKCSATNRIIKADDHASVQINIAKVDEEGRAIPGEYITYALSGNVRARGESDDSLNRLAQNDGLLKNVWSYSR</sequence>
<dbReference type="EMBL" id="CR380957">
    <property type="protein sequence ID" value="CAG61549.1"/>
    <property type="molecule type" value="Genomic_DNA"/>
</dbReference>
<dbReference type="RefSeq" id="XP_448586.1">
    <property type="nucleotide sequence ID" value="XM_448586.1"/>
</dbReference>
<dbReference type="SMR" id="Q6FMF8"/>
<dbReference type="FunCoup" id="Q6FMF8">
    <property type="interactions" value="1031"/>
</dbReference>
<dbReference type="STRING" id="284593.Q6FMF8"/>
<dbReference type="EnsemblFungi" id="CAGL0K08382g-T">
    <property type="protein sequence ID" value="CAGL0K08382g-T-p1"/>
    <property type="gene ID" value="CAGL0K08382g"/>
</dbReference>
<dbReference type="KEGG" id="cgr:2890354"/>
<dbReference type="CGD" id="CAL0134011">
    <property type="gene designation" value="CAGL0K08382g"/>
</dbReference>
<dbReference type="VEuPathDB" id="FungiDB:B1J91_K08382g"/>
<dbReference type="VEuPathDB" id="FungiDB:CAGL0K08382g"/>
<dbReference type="eggNOG" id="KOG3486">
    <property type="taxonomic scope" value="Eukaryota"/>
</dbReference>
<dbReference type="HOGENOM" id="CLU_167122_2_0_1"/>
<dbReference type="InParanoid" id="Q6FMF8"/>
<dbReference type="OMA" id="GESDACM"/>
<dbReference type="Proteomes" id="UP000002428">
    <property type="component" value="Chromosome K"/>
</dbReference>
<dbReference type="GO" id="GO:0005737">
    <property type="term" value="C:cytoplasm"/>
    <property type="evidence" value="ECO:0007669"/>
    <property type="project" value="UniProtKB-SubCell"/>
</dbReference>
<dbReference type="GO" id="GO:1990904">
    <property type="term" value="C:ribonucleoprotein complex"/>
    <property type="evidence" value="ECO:0007669"/>
    <property type="project" value="UniProtKB-KW"/>
</dbReference>
<dbReference type="GO" id="GO:0005840">
    <property type="term" value="C:ribosome"/>
    <property type="evidence" value="ECO:0007669"/>
    <property type="project" value="UniProtKB-KW"/>
</dbReference>
<dbReference type="GO" id="GO:0003735">
    <property type="term" value="F:structural constituent of ribosome"/>
    <property type="evidence" value="ECO:0007669"/>
    <property type="project" value="InterPro"/>
</dbReference>
<dbReference type="GO" id="GO:0006364">
    <property type="term" value="P:rRNA processing"/>
    <property type="evidence" value="ECO:0007669"/>
    <property type="project" value="UniProtKB-KW"/>
</dbReference>
<dbReference type="GO" id="GO:0006412">
    <property type="term" value="P:translation"/>
    <property type="evidence" value="ECO:0007669"/>
    <property type="project" value="InterPro"/>
</dbReference>
<dbReference type="FunFam" id="3.30.1230.20:FF:000001">
    <property type="entry name" value="40S ribosomal protein S21"/>
    <property type="match status" value="1"/>
</dbReference>
<dbReference type="Gene3D" id="3.30.1230.20">
    <property type="match status" value="1"/>
</dbReference>
<dbReference type="InterPro" id="IPR001931">
    <property type="entry name" value="Ribosomal_eS21"/>
</dbReference>
<dbReference type="InterPro" id="IPR018279">
    <property type="entry name" value="Ribosomal_eS21_CS"/>
</dbReference>
<dbReference type="InterPro" id="IPR038579">
    <property type="entry name" value="Ribosomal_eS21_sf"/>
</dbReference>
<dbReference type="PANTHER" id="PTHR10442">
    <property type="entry name" value="40S RIBOSOMAL PROTEIN S21"/>
    <property type="match status" value="1"/>
</dbReference>
<dbReference type="Pfam" id="PF01249">
    <property type="entry name" value="Ribosomal_S21e"/>
    <property type="match status" value="1"/>
</dbReference>
<dbReference type="PIRSF" id="PIRSF002148">
    <property type="entry name" value="Ribosomal_S21e"/>
    <property type="match status" value="1"/>
</dbReference>
<dbReference type="PROSITE" id="PS00996">
    <property type="entry name" value="RIBOSOMAL_S21E"/>
    <property type="match status" value="1"/>
</dbReference>
<evidence type="ECO:0000250" key="1"/>
<evidence type="ECO:0000305" key="2"/>
<gene>
    <name type="primary">RPS21</name>
    <name type="ordered locus">CAGL0K08382g</name>
</gene>
<accession>Q6FMF8</accession>
<keyword id="KW-0963">Cytoplasm</keyword>
<keyword id="KW-1185">Reference proteome</keyword>
<keyword id="KW-0687">Ribonucleoprotein</keyword>
<keyword id="KW-0689">Ribosomal protein</keyword>
<keyword id="KW-0698">rRNA processing</keyword>
<protein>
    <recommendedName>
        <fullName evidence="2">Small ribosomal subunit protein eS21</fullName>
    </recommendedName>
    <alternativeName>
        <fullName>40S ribosomal protein S21</fullName>
    </alternativeName>
</protein>
<proteinExistence type="inferred from homology"/>
<name>RS21_CANGA</name>
<organism>
    <name type="scientific">Candida glabrata (strain ATCC 2001 / BCRC 20586 / JCM 3761 / NBRC 0622 / NRRL Y-65 / CBS 138)</name>
    <name type="common">Yeast</name>
    <name type="synonym">Nakaseomyces glabratus</name>
    <dbReference type="NCBI Taxonomy" id="284593"/>
    <lineage>
        <taxon>Eukaryota</taxon>
        <taxon>Fungi</taxon>
        <taxon>Dikarya</taxon>
        <taxon>Ascomycota</taxon>
        <taxon>Saccharomycotina</taxon>
        <taxon>Saccharomycetes</taxon>
        <taxon>Saccharomycetales</taxon>
        <taxon>Saccharomycetaceae</taxon>
        <taxon>Nakaseomyces</taxon>
    </lineage>
</organism>